<accession>C3JY27</accession>
<evidence type="ECO:0000255" key="1">
    <source>
        <dbReference type="HAMAP-Rule" id="MF_00057"/>
    </source>
</evidence>
<comment type="function">
    <text evidence="1">Activates KDO (a required 8-carbon sugar) for incorporation into bacterial lipopolysaccharide in Gram-negative bacteria.</text>
</comment>
<comment type="catalytic activity">
    <reaction evidence="1">
        <text>3-deoxy-alpha-D-manno-oct-2-ulosonate + CTP = CMP-3-deoxy-beta-D-manno-octulosonate + diphosphate</text>
        <dbReference type="Rhea" id="RHEA:23448"/>
        <dbReference type="ChEBI" id="CHEBI:33019"/>
        <dbReference type="ChEBI" id="CHEBI:37563"/>
        <dbReference type="ChEBI" id="CHEBI:85986"/>
        <dbReference type="ChEBI" id="CHEBI:85987"/>
        <dbReference type="EC" id="2.7.7.38"/>
    </reaction>
</comment>
<comment type="pathway">
    <text evidence="1">Nucleotide-sugar biosynthesis; CMP-3-deoxy-D-manno-octulosonate biosynthesis; CMP-3-deoxy-D-manno-octulosonate from 3-deoxy-D-manno-octulosonate and CTP: step 1/1.</text>
</comment>
<comment type="pathway">
    <text evidence="1">Bacterial outer membrane biogenesis; lipopolysaccharide biosynthesis.</text>
</comment>
<comment type="subcellular location">
    <subcellularLocation>
        <location evidence="1">Cytoplasm</location>
    </subcellularLocation>
</comment>
<comment type="similarity">
    <text evidence="1">Belongs to the KdsB family.</text>
</comment>
<proteinExistence type="inferred from homology"/>
<reference key="1">
    <citation type="journal article" date="2009" name="Genome Biol.">
        <title>Genomic and genetic analyses of diversity and plant interactions of Pseudomonas fluorescens.</title>
        <authorList>
            <person name="Silby M.W."/>
            <person name="Cerdeno-Tarraga A.M."/>
            <person name="Vernikos G.S."/>
            <person name="Giddens S.R."/>
            <person name="Jackson R.W."/>
            <person name="Preston G.M."/>
            <person name="Zhang X.-X."/>
            <person name="Moon C.D."/>
            <person name="Gehrig S.M."/>
            <person name="Godfrey S.A.C."/>
            <person name="Knight C.G."/>
            <person name="Malone J.G."/>
            <person name="Robinson Z."/>
            <person name="Spiers A.J."/>
            <person name="Harris S."/>
            <person name="Challis G.L."/>
            <person name="Yaxley A.M."/>
            <person name="Harris D."/>
            <person name="Seeger K."/>
            <person name="Murphy L."/>
            <person name="Rutter S."/>
            <person name="Squares R."/>
            <person name="Quail M.A."/>
            <person name="Saunders E."/>
            <person name="Mavromatis K."/>
            <person name="Brettin T.S."/>
            <person name="Bentley S.D."/>
            <person name="Hothersall J."/>
            <person name="Stephens E."/>
            <person name="Thomas C.M."/>
            <person name="Parkhill J."/>
            <person name="Levy S.B."/>
            <person name="Rainey P.B."/>
            <person name="Thomson N.R."/>
        </authorList>
    </citation>
    <scope>NUCLEOTIDE SEQUENCE [LARGE SCALE GENOMIC DNA]</scope>
    <source>
        <strain>SBW25</strain>
    </source>
</reference>
<keyword id="KW-0963">Cytoplasm</keyword>
<keyword id="KW-0448">Lipopolysaccharide biosynthesis</keyword>
<keyword id="KW-0548">Nucleotidyltransferase</keyword>
<keyword id="KW-0808">Transferase</keyword>
<name>KDSB_PSEFS</name>
<sequence length="254" mass="27627">MTTAFTVVIPSRYASTRLPGKPLQLIGDKPMIQLVWEQACKSSAERVVVATDDPRIIEACQGFGAEAVLTREDHNSGTDRLAEVATKLGLAPDAIVVNVQGDEPLIPPSVIDQVAANLAAHGEARMATLAEPIEDIATLFNPNVVKVVSDINGLALTFSRSTLPWARDAFAKQPDVLPEGVPYRRHIGIYAYRAGFLHDFVSWGPCWLENTESLEQLRALWHGVRIHVGDALEAPPAGVDTPEDLERVRRLLGA</sequence>
<organism>
    <name type="scientific">Pseudomonas fluorescens (strain SBW25)</name>
    <dbReference type="NCBI Taxonomy" id="216595"/>
    <lineage>
        <taxon>Bacteria</taxon>
        <taxon>Pseudomonadati</taxon>
        <taxon>Pseudomonadota</taxon>
        <taxon>Gammaproteobacteria</taxon>
        <taxon>Pseudomonadales</taxon>
        <taxon>Pseudomonadaceae</taxon>
        <taxon>Pseudomonas</taxon>
    </lineage>
</organism>
<protein>
    <recommendedName>
        <fullName evidence="1">3-deoxy-manno-octulosonate cytidylyltransferase</fullName>
        <ecNumber evidence="1">2.7.7.38</ecNumber>
    </recommendedName>
    <alternativeName>
        <fullName evidence="1">CMP-2-keto-3-deoxyoctulosonic acid synthase</fullName>
        <shortName evidence="1">CKS</shortName>
        <shortName evidence="1">CMP-KDO synthase</shortName>
    </alternativeName>
</protein>
<gene>
    <name evidence="1" type="primary">kdsB</name>
    <name type="ordered locus">PFLU_3770</name>
</gene>
<dbReference type="EC" id="2.7.7.38" evidence="1"/>
<dbReference type="EMBL" id="AM181176">
    <property type="protein sequence ID" value="CAY50056.1"/>
    <property type="molecule type" value="Genomic_DNA"/>
</dbReference>
<dbReference type="RefSeq" id="WP_012724908.1">
    <property type="nucleotide sequence ID" value="NC_012660.1"/>
</dbReference>
<dbReference type="SMR" id="C3JY27"/>
<dbReference type="STRING" id="294.SRM1_04121"/>
<dbReference type="GeneID" id="93465118"/>
<dbReference type="PATRIC" id="fig|216595.4.peg.3915"/>
<dbReference type="eggNOG" id="COG1212">
    <property type="taxonomic scope" value="Bacteria"/>
</dbReference>
<dbReference type="HOGENOM" id="CLU_065038_1_0_6"/>
<dbReference type="OrthoDB" id="9815559at2"/>
<dbReference type="UniPathway" id="UPA00030"/>
<dbReference type="UniPathway" id="UPA00358">
    <property type="reaction ID" value="UER00476"/>
</dbReference>
<dbReference type="GO" id="GO:0005829">
    <property type="term" value="C:cytosol"/>
    <property type="evidence" value="ECO:0007669"/>
    <property type="project" value="TreeGrafter"/>
</dbReference>
<dbReference type="GO" id="GO:0008690">
    <property type="term" value="F:3-deoxy-manno-octulosonate cytidylyltransferase activity"/>
    <property type="evidence" value="ECO:0007669"/>
    <property type="project" value="UniProtKB-UniRule"/>
</dbReference>
<dbReference type="GO" id="GO:0033468">
    <property type="term" value="P:CMP-keto-3-deoxy-D-manno-octulosonic acid biosynthetic process"/>
    <property type="evidence" value="ECO:0007669"/>
    <property type="project" value="UniProtKB-UniRule"/>
</dbReference>
<dbReference type="GO" id="GO:0009103">
    <property type="term" value="P:lipopolysaccharide biosynthetic process"/>
    <property type="evidence" value="ECO:0007669"/>
    <property type="project" value="UniProtKB-UniRule"/>
</dbReference>
<dbReference type="CDD" id="cd02517">
    <property type="entry name" value="CMP-KDO-Synthetase"/>
    <property type="match status" value="1"/>
</dbReference>
<dbReference type="FunFam" id="3.90.550.10:FF:000011">
    <property type="entry name" value="3-deoxy-manno-octulosonate cytidylyltransferase"/>
    <property type="match status" value="1"/>
</dbReference>
<dbReference type="Gene3D" id="3.90.550.10">
    <property type="entry name" value="Spore Coat Polysaccharide Biosynthesis Protein SpsA, Chain A"/>
    <property type="match status" value="1"/>
</dbReference>
<dbReference type="HAMAP" id="MF_00057">
    <property type="entry name" value="KdsB"/>
    <property type="match status" value="1"/>
</dbReference>
<dbReference type="InterPro" id="IPR003329">
    <property type="entry name" value="Cytidylyl_trans"/>
</dbReference>
<dbReference type="InterPro" id="IPR004528">
    <property type="entry name" value="KdsB"/>
</dbReference>
<dbReference type="InterPro" id="IPR029044">
    <property type="entry name" value="Nucleotide-diphossugar_trans"/>
</dbReference>
<dbReference type="NCBIfam" id="TIGR00466">
    <property type="entry name" value="kdsB"/>
    <property type="match status" value="1"/>
</dbReference>
<dbReference type="NCBIfam" id="NF003950">
    <property type="entry name" value="PRK05450.1-3"/>
    <property type="match status" value="1"/>
</dbReference>
<dbReference type="NCBIfam" id="NF003952">
    <property type="entry name" value="PRK05450.1-5"/>
    <property type="match status" value="1"/>
</dbReference>
<dbReference type="NCBIfam" id="NF009905">
    <property type="entry name" value="PRK13368.1"/>
    <property type="match status" value="1"/>
</dbReference>
<dbReference type="PANTHER" id="PTHR42866">
    <property type="entry name" value="3-DEOXY-MANNO-OCTULOSONATE CYTIDYLYLTRANSFERASE"/>
    <property type="match status" value="1"/>
</dbReference>
<dbReference type="PANTHER" id="PTHR42866:SF2">
    <property type="entry name" value="3-DEOXY-MANNO-OCTULOSONATE CYTIDYLYLTRANSFERASE, MITOCHONDRIAL"/>
    <property type="match status" value="1"/>
</dbReference>
<dbReference type="Pfam" id="PF02348">
    <property type="entry name" value="CTP_transf_3"/>
    <property type="match status" value="1"/>
</dbReference>
<dbReference type="SUPFAM" id="SSF53448">
    <property type="entry name" value="Nucleotide-diphospho-sugar transferases"/>
    <property type="match status" value="1"/>
</dbReference>
<feature type="chain" id="PRO_1000202345" description="3-deoxy-manno-octulosonate cytidylyltransferase">
    <location>
        <begin position="1"/>
        <end position="254"/>
    </location>
</feature>